<dbReference type="EMBL" id="CP000964">
    <property type="protein sequence ID" value="ACI08727.1"/>
    <property type="molecule type" value="Genomic_DNA"/>
</dbReference>
<dbReference type="SMR" id="B5XTL2"/>
<dbReference type="KEGG" id="kpe:KPK_0271"/>
<dbReference type="HOGENOM" id="CLU_131462_5_1_6"/>
<dbReference type="UniPathway" id="UPA00030"/>
<dbReference type="Proteomes" id="UP000001734">
    <property type="component" value="Chromosome"/>
</dbReference>
<dbReference type="GO" id="GO:0005886">
    <property type="term" value="C:plasma membrane"/>
    <property type="evidence" value="ECO:0007669"/>
    <property type="project" value="UniProtKB-SubCell"/>
</dbReference>
<dbReference type="GO" id="GO:1901505">
    <property type="term" value="F:carbohydrate derivative transmembrane transporter activity"/>
    <property type="evidence" value="ECO:0007669"/>
    <property type="project" value="InterPro"/>
</dbReference>
<dbReference type="GO" id="GO:0009245">
    <property type="term" value="P:lipid A biosynthetic process"/>
    <property type="evidence" value="ECO:0007669"/>
    <property type="project" value="UniProtKB-UniRule"/>
</dbReference>
<dbReference type="GO" id="GO:0009103">
    <property type="term" value="P:lipopolysaccharide biosynthetic process"/>
    <property type="evidence" value="ECO:0007669"/>
    <property type="project" value="UniProtKB-UniRule"/>
</dbReference>
<dbReference type="FunFam" id="1.10.3730.20:FF:000002">
    <property type="entry name" value="Probable 4-amino-4-deoxy-L-arabinose-phosphoundecaprenol flippase subunit ArnE"/>
    <property type="match status" value="1"/>
</dbReference>
<dbReference type="Gene3D" id="1.10.3730.20">
    <property type="match status" value="1"/>
</dbReference>
<dbReference type="HAMAP" id="MF_01869">
    <property type="entry name" value="Flippase_ArnE"/>
    <property type="match status" value="1"/>
</dbReference>
<dbReference type="InterPro" id="IPR000620">
    <property type="entry name" value="EamA_dom"/>
</dbReference>
<dbReference type="InterPro" id="IPR022883">
    <property type="entry name" value="Flippase_ArnE"/>
</dbReference>
<dbReference type="InterPro" id="IPR000390">
    <property type="entry name" value="Small_drug/metabolite_transptr"/>
</dbReference>
<dbReference type="NCBIfam" id="NF011625">
    <property type="entry name" value="PRK15051.1"/>
    <property type="match status" value="1"/>
</dbReference>
<dbReference type="PANTHER" id="PTHR30561:SF23">
    <property type="entry name" value="4-AMINO-4-DEOXY-L-ARABINOSE-PHOSPHOUNDECAPRENOL FLIPPASE SUBUNIT ARNE-RELATED"/>
    <property type="match status" value="1"/>
</dbReference>
<dbReference type="PANTHER" id="PTHR30561">
    <property type="entry name" value="SMR FAMILY PROTON-DEPENDENT DRUG EFFLUX TRANSPORTER SUGE"/>
    <property type="match status" value="1"/>
</dbReference>
<dbReference type="Pfam" id="PF00892">
    <property type="entry name" value="EamA"/>
    <property type="match status" value="1"/>
</dbReference>
<dbReference type="SUPFAM" id="SSF103481">
    <property type="entry name" value="Multidrug resistance efflux transporter EmrE"/>
    <property type="match status" value="1"/>
</dbReference>
<reference key="1">
    <citation type="journal article" date="2008" name="PLoS Genet.">
        <title>Complete genome sequence of the N2-fixing broad host range endophyte Klebsiella pneumoniae 342 and virulence predictions verified in mice.</title>
        <authorList>
            <person name="Fouts D.E."/>
            <person name="Tyler H.L."/>
            <person name="DeBoy R.T."/>
            <person name="Daugherty S."/>
            <person name="Ren Q."/>
            <person name="Badger J.H."/>
            <person name="Durkin A.S."/>
            <person name="Huot H."/>
            <person name="Shrivastava S."/>
            <person name="Kothari S."/>
            <person name="Dodson R.J."/>
            <person name="Mohamoud Y."/>
            <person name="Khouri H."/>
            <person name="Roesch L.F.W."/>
            <person name="Krogfelt K.A."/>
            <person name="Struve C."/>
            <person name="Triplett E.W."/>
            <person name="Methe B.A."/>
        </authorList>
    </citation>
    <scope>NUCLEOTIDE SEQUENCE [LARGE SCALE GENOMIC DNA]</scope>
    <source>
        <strain>342</strain>
    </source>
</reference>
<proteinExistence type="inferred from homology"/>
<feature type="chain" id="PRO_0000382977" description="Probable 4-amino-4-deoxy-L-arabinose-phosphoundecaprenol flippase subunit ArnE">
    <location>
        <begin position="1"/>
        <end position="112"/>
    </location>
</feature>
<feature type="transmembrane region" description="Helical" evidence="1">
    <location>
        <begin position="37"/>
        <end position="57"/>
    </location>
</feature>
<feature type="transmembrane region" description="Helical" evidence="1">
    <location>
        <begin position="66"/>
        <end position="86"/>
    </location>
</feature>
<feature type="transmembrane region" description="Helical" evidence="1">
    <location>
        <begin position="89"/>
        <end position="109"/>
    </location>
</feature>
<feature type="domain" description="EamA" evidence="1">
    <location>
        <begin position="35"/>
        <end position="110"/>
    </location>
</feature>
<organism>
    <name type="scientific">Klebsiella pneumoniae (strain 342)</name>
    <dbReference type="NCBI Taxonomy" id="507522"/>
    <lineage>
        <taxon>Bacteria</taxon>
        <taxon>Pseudomonadati</taxon>
        <taxon>Pseudomonadota</taxon>
        <taxon>Gammaproteobacteria</taxon>
        <taxon>Enterobacterales</taxon>
        <taxon>Enterobacteriaceae</taxon>
        <taxon>Klebsiella/Raoultella group</taxon>
        <taxon>Klebsiella</taxon>
        <taxon>Klebsiella pneumoniae complex</taxon>
    </lineage>
</organism>
<protein>
    <recommendedName>
        <fullName evidence="1">Probable 4-amino-4-deoxy-L-arabinose-phosphoundecaprenol flippase subunit ArnE</fullName>
        <shortName evidence="1">L-Ara4N-phosphoundecaprenol flippase subunit ArnE</shortName>
    </recommendedName>
    <alternativeName>
        <fullName evidence="1">Undecaprenyl phosphate-aminoarabinose flippase subunit ArnE</fullName>
    </alternativeName>
</protein>
<evidence type="ECO:0000255" key="1">
    <source>
        <dbReference type="HAMAP-Rule" id="MF_01869"/>
    </source>
</evidence>
<sequence>MSVWICLVFASLLSCAGQLCQKQATRPSRRGRRSRHILFWLGMALLCLGCGMLLWLSVLQSIPVSIAYPMLSLNFVWVTLAGWGIWHEPVARRHWLGVGLIVVGIVILGTSV</sequence>
<keyword id="KW-0997">Cell inner membrane</keyword>
<keyword id="KW-1003">Cell membrane</keyword>
<keyword id="KW-0441">Lipid A biosynthesis</keyword>
<keyword id="KW-0444">Lipid biosynthesis</keyword>
<keyword id="KW-0443">Lipid metabolism</keyword>
<keyword id="KW-0448">Lipopolysaccharide biosynthesis</keyword>
<keyword id="KW-0472">Membrane</keyword>
<keyword id="KW-0812">Transmembrane</keyword>
<keyword id="KW-1133">Transmembrane helix</keyword>
<keyword id="KW-0813">Transport</keyword>
<comment type="function">
    <text evidence="1">Translocates 4-amino-4-deoxy-L-arabinose-phosphoundecaprenol (alpha-L-Ara4N-phosphoundecaprenol) from the cytoplasmic to the periplasmic side of the inner membrane.</text>
</comment>
<comment type="pathway">
    <text evidence="1">Bacterial outer membrane biogenesis; lipopolysaccharide biosynthesis.</text>
</comment>
<comment type="subunit">
    <text evidence="1">Heterodimer of ArnE and ArnF.</text>
</comment>
<comment type="subcellular location">
    <subcellularLocation>
        <location evidence="1">Cell inner membrane</location>
        <topology evidence="1">Multi-pass membrane protein</topology>
    </subcellularLocation>
</comment>
<comment type="similarity">
    <text evidence="1">Belongs to the ArnE family.</text>
</comment>
<gene>
    <name evidence="1" type="primary">arnE</name>
    <name type="ordered locus">KPK_0271</name>
</gene>
<name>ARNE_KLEP3</name>
<accession>B5XTL2</accession>